<feature type="chain" id="PRO_1000055889" description="Large ribosomal subunit protein bL17">
    <location>
        <begin position="1"/>
        <end position="122"/>
    </location>
</feature>
<organism>
    <name type="scientific">Neisseria meningitidis serogroup C / serotype 2a (strain ATCC 700532 / DSM 15464 / FAM18)</name>
    <dbReference type="NCBI Taxonomy" id="272831"/>
    <lineage>
        <taxon>Bacteria</taxon>
        <taxon>Pseudomonadati</taxon>
        <taxon>Pseudomonadota</taxon>
        <taxon>Betaproteobacteria</taxon>
        <taxon>Neisseriales</taxon>
        <taxon>Neisseriaceae</taxon>
        <taxon>Neisseria</taxon>
    </lineage>
</organism>
<proteinExistence type="inferred from homology"/>
<gene>
    <name evidence="1" type="primary">rplQ</name>
    <name type="ordered locus">NMC0159</name>
</gene>
<keyword id="KW-0687">Ribonucleoprotein</keyword>
<keyword id="KW-0689">Ribosomal protein</keyword>
<name>RL17_NEIMF</name>
<protein>
    <recommendedName>
        <fullName evidence="1">Large ribosomal subunit protein bL17</fullName>
    </recommendedName>
    <alternativeName>
        <fullName evidence="2">50S ribosomal protein L17</fullName>
    </alternativeName>
</protein>
<accession>A1KRK0</accession>
<dbReference type="EMBL" id="AM421808">
    <property type="protein sequence ID" value="CAM09478.1"/>
    <property type="molecule type" value="Genomic_DNA"/>
</dbReference>
<dbReference type="RefSeq" id="WP_002216251.1">
    <property type="nucleotide sequence ID" value="NC_008767.1"/>
</dbReference>
<dbReference type="SMR" id="A1KRK0"/>
<dbReference type="GeneID" id="93387244"/>
<dbReference type="KEGG" id="nmc:NMC0159"/>
<dbReference type="HOGENOM" id="CLU_074407_2_0_4"/>
<dbReference type="Proteomes" id="UP000002286">
    <property type="component" value="Chromosome"/>
</dbReference>
<dbReference type="GO" id="GO:0022625">
    <property type="term" value="C:cytosolic large ribosomal subunit"/>
    <property type="evidence" value="ECO:0007669"/>
    <property type="project" value="TreeGrafter"/>
</dbReference>
<dbReference type="GO" id="GO:0003735">
    <property type="term" value="F:structural constituent of ribosome"/>
    <property type="evidence" value="ECO:0007669"/>
    <property type="project" value="InterPro"/>
</dbReference>
<dbReference type="GO" id="GO:0006412">
    <property type="term" value="P:translation"/>
    <property type="evidence" value="ECO:0007669"/>
    <property type="project" value="UniProtKB-UniRule"/>
</dbReference>
<dbReference type="FunFam" id="3.90.1030.10:FF:000001">
    <property type="entry name" value="50S ribosomal protein L17"/>
    <property type="match status" value="1"/>
</dbReference>
<dbReference type="Gene3D" id="3.90.1030.10">
    <property type="entry name" value="Ribosomal protein L17"/>
    <property type="match status" value="1"/>
</dbReference>
<dbReference type="HAMAP" id="MF_01368">
    <property type="entry name" value="Ribosomal_bL17"/>
    <property type="match status" value="1"/>
</dbReference>
<dbReference type="InterPro" id="IPR000456">
    <property type="entry name" value="Ribosomal_bL17"/>
</dbReference>
<dbReference type="InterPro" id="IPR047859">
    <property type="entry name" value="Ribosomal_bL17_CS"/>
</dbReference>
<dbReference type="InterPro" id="IPR036373">
    <property type="entry name" value="Ribosomal_bL17_sf"/>
</dbReference>
<dbReference type="NCBIfam" id="TIGR00059">
    <property type="entry name" value="L17"/>
    <property type="match status" value="1"/>
</dbReference>
<dbReference type="PANTHER" id="PTHR14413:SF16">
    <property type="entry name" value="LARGE RIBOSOMAL SUBUNIT PROTEIN BL17M"/>
    <property type="match status" value="1"/>
</dbReference>
<dbReference type="PANTHER" id="PTHR14413">
    <property type="entry name" value="RIBOSOMAL PROTEIN L17"/>
    <property type="match status" value="1"/>
</dbReference>
<dbReference type="Pfam" id="PF01196">
    <property type="entry name" value="Ribosomal_L17"/>
    <property type="match status" value="1"/>
</dbReference>
<dbReference type="SUPFAM" id="SSF64263">
    <property type="entry name" value="Prokaryotic ribosomal protein L17"/>
    <property type="match status" value="1"/>
</dbReference>
<dbReference type="PROSITE" id="PS01167">
    <property type="entry name" value="RIBOSOMAL_L17"/>
    <property type="match status" value="1"/>
</dbReference>
<sequence>MRHRNGNRKLNRTSSHRAAMLRNMANSLLTHETIVTTLPKAKELRRVVEPLITLGKKPSLANRRLAFDRTRDRDVVVKLFGDLGPRFTARNGGYVRVLKYGFRKGDNAPLALVELVDKPAAE</sequence>
<comment type="subunit">
    <text evidence="1">Part of the 50S ribosomal subunit. Contacts protein L32.</text>
</comment>
<comment type="similarity">
    <text evidence="1">Belongs to the bacterial ribosomal protein bL17 family.</text>
</comment>
<evidence type="ECO:0000255" key="1">
    <source>
        <dbReference type="HAMAP-Rule" id="MF_01368"/>
    </source>
</evidence>
<evidence type="ECO:0000305" key="2"/>
<reference key="1">
    <citation type="journal article" date="2007" name="PLoS Genet.">
        <title>Meningococcal genetic variation mechanisms viewed through comparative analysis of serogroup C strain FAM18.</title>
        <authorList>
            <person name="Bentley S.D."/>
            <person name="Vernikos G.S."/>
            <person name="Snyder L.A.S."/>
            <person name="Churcher C."/>
            <person name="Arrowsmith C."/>
            <person name="Chillingworth T."/>
            <person name="Cronin A."/>
            <person name="Davis P.H."/>
            <person name="Holroyd N.E."/>
            <person name="Jagels K."/>
            <person name="Maddison M."/>
            <person name="Moule S."/>
            <person name="Rabbinowitsch E."/>
            <person name="Sharp S."/>
            <person name="Unwin L."/>
            <person name="Whitehead S."/>
            <person name="Quail M.A."/>
            <person name="Achtman M."/>
            <person name="Barrell B.G."/>
            <person name="Saunders N.J."/>
            <person name="Parkhill J."/>
        </authorList>
    </citation>
    <scope>NUCLEOTIDE SEQUENCE [LARGE SCALE GENOMIC DNA]</scope>
    <source>
        <strain>ATCC 700532 / DSM 15464 / FAM18</strain>
    </source>
</reference>